<dbReference type="EMBL" id="DQ126107">
    <property type="protein sequence ID" value="AAZ94047.1"/>
    <property type="molecule type" value="Genomic_RNA"/>
</dbReference>
<dbReference type="RefSeq" id="YP_654550.1">
    <property type="nucleotide sequence ID" value="NC_008177.1"/>
</dbReference>
<dbReference type="KEGG" id="vg:5076669"/>
<dbReference type="Proteomes" id="UP000000349">
    <property type="component" value="Genome"/>
</dbReference>
<accession>Q1I0U5</accession>
<sequence>MGGRSGDLLDRRTSRRGFTCVLEFSDSDTNVDPVSVLMGNESAFIGKINNDDFKKMCSRMNWNEDRGTAYIESVVGAPFYDLSDPVVVSHTRANKLITSPVSYNELVVWTQGKIRDSETDKLLGPTATNEALKTLLGSEVSANIIWKANSLEYSVPKLTALYAKGDRSIPHIFWTKQTLEFNSPQCHEWSAMDEISKNDPLDPLVMWPYLEEDEERTLKDLHTEIRIWYSLRTGRNPVKQTVSAAPSKSTLEYVPWVTRNMSYRSLPVQISYQSSHGLLWRGNRPQLYSSTLFGDNTVELTPYDMSQPYVNNDPFVEMIPFNREIHNDYDFCWKQLNDEYFMRKLPAQGEDSSNMFVVGDSTFFLGMGSVAIAWATTLGAGAGIHQRKIRQVVARRYKTDDVSGHALSALLMHSSHFYWYLYEIYLNHKSSKSVYAFPFREQKSGRYHSISEYKGALDAALQLNLPDFAIKRLGQFTKFLKKLDL</sequence>
<proteinExistence type="predicted"/>
<organismHost>
    <name type="scientific">Micromonas pusilla</name>
    <name type="common">Picoplanktonic green alga</name>
    <name type="synonym">Chromulina pusilla</name>
    <dbReference type="NCBI Taxonomy" id="38833"/>
</organismHost>
<protein>
    <recommendedName>
        <fullName>Putative non-structural protein 1</fullName>
        <shortName>NS1</shortName>
    </recommendedName>
</protein>
<name>NS1_MPRVN</name>
<gene>
    <name type="primary">S7</name>
</gene>
<organism>
    <name type="scientific">Micromonas pusilla reovirus (isolate Netherlands/2005)</name>
    <name type="common">MpRV</name>
    <dbReference type="NCBI Taxonomy" id="649596"/>
    <lineage>
        <taxon>Viruses</taxon>
        <taxon>Riboviria</taxon>
        <taxon>Orthornavirae</taxon>
        <taxon>Duplornaviricota</taxon>
        <taxon>Resentoviricetes</taxon>
        <taxon>Reovirales</taxon>
        <taxon>Sedoreoviridae</taxon>
        <taxon>Mimoreovirus</taxon>
        <taxon>Micromonas pusilla reovirus</taxon>
    </lineage>
</organism>
<reference key="1">
    <citation type="journal article" date="2006" name="J. Gen. Virol.">
        <title>Micromonas pusilla reovirus: a new member of the family Reoviridae assigned to a novel proposed genus (Mimoreovirus).</title>
        <authorList>
            <person name="Attoui H."/>
            <person name="Jaafar F.M."/>
            <person name="Belhouchet M."/>
            <person name="de Micco P."/>
            <person name="de Lamballerie X."/>
            <person name="Brussaard C.P."/>
        </authorList>
    </citation>
    <scope>NUCLEOTIDE SEQUENCE [GENOMIC RNA]</scope>
</reference>
<keyword id="KW-1185">Reference proteome</keyword>
<feature type="chain" id="PRO_0000404158" description="Putative non-structural protein 1">
    <location>
        <begin position="1"/>
        <end position="485"/>
    </location>
</feature>